<keyword id="KW-0963">Cytoplasm</keyword>
<keyword id="KW-0456">Lyase</keyword>
<keyword id="KW-1185">Reference proteome</keyword>
<keyword id="KW-0704">Schiff base</keyword>
<dbReference type="EC" id="4.1.2.4" evidence="1"/>
<dbReference type="EMBL" id="CP000230">
    <property type="protein sequence ID" value="ABC23103.1"/>
    <property type="molecule type" value="Genomic_DNA"/>
</dbReference>
<dbReference type="RefSeq" id="WP_011389958.1">
    <property type="nucleotide sequence ID" value="NC_007643.1"/>
</dbReference>
<dbReference type="RefSeq" id="YP_427390.1">
    <property type="nucleotide sequence ID" value="NC_007643.1"/>
</dbReference>
<dbReference type="SMR" id="Q2RRZ2"/>
<dbReference type="STRING" id="269796.Rru_A2303"/>
<dbReference type="EnsemblBacteria" id="ABC23103">
    <property type="protein sequence ID" value="ABC23103"/>
    <property type="gene ID" value="Rru_A2303"/>
</dbReference>
<dbReference type="KEGG" id="rru:Rru_A2303"/>
<dbReference type="PATRIC" id="fig|269796.9.peg.2401"/>
<dbReference type="eggNOG" id="COG0274">
    <property type="taxonomic scope" value="Bacteria"/>
</dbReference>
<dbReference type="HOGENOM" id="CLU_053595_0_1_5"/>
<dbReference type="PhylomeDB" id="Q2RRZ2"/>
<dbReference type="UniPathway" id="UPA00002">
    <property type="reaction ID" value="UER00468"/>
</dbReference>
<dbReference type="Proteomes" id="UP000001929">
    <property type="component" value="Chromosome"/>
</dbReference>
<dbReference type="GO" id="GO:0005737">
    <property type="term" value="C:cytoplasm"/>
    <property type="evidence" value="ECO:0007669"/>
    <property type="project" value="UniProtKB-SubCell"/>
</dbReference>
<dbReference type="GO" id="GO:0004139">
    <property type="term" value="F:deoxyribose-phosphate aldolase activity"/>
    <property type="evidence" value="ECO:0007669"/>
    <property type="project" value="UniProtKB-UniRule"/>
</dbReference>
<dbReference type="GO" id="GO:0006018">
    <property type="term" value="P:2-deoxyribose 1-phosphate catabolic process"/>
    <property type="evidence" value="ECO:0007669"/>
    <property type="project" value="UniProtKB-UniRule"/>
</dbReference>
<dbReference type="GO" id="GO:0016052">
    <property type="term" value="P:carbohydrate catabolic process"/>
    <property type="evidence" value="ECO:0007669"/>
    <property type="project" value="TreeGrafter"/>
</dbReference>
<dbReference type="GO" id="GO:0009264">
    <property type="term" value="P:deoxyribonucleotide catabolic process"/>
    <property type="evidence" value="ECO:0007669"/>
    <property type="project" value="InterPro"/>
</dbReference>
<dbReference type="CDD" id="cd00959">
    <property type="entry name" value="DeoC"/>
    <property type="match status" value="1"/>
</dbReference>
<dbReference type="FunFam" id="3.20.20.70:FF:000044">
    <property type="entry name" value="Deoxyribose-phosphate aldolase"/>
    <property type="match status" value="1"/>
</dbReference>
<dbReference type="Gene3D" id="3.20.20.70">
    <property type="entry name" value="Aldolase class I"/>
    <property type="match status" value="1"/>
</dbReference>
<dbReference type="HAMAP" id="MF_00114">
    <property type="entry name" value="DeoC_type1"/>
    <property type="match status" value="1"/>
</dbReference>
<dbReference type="InterPro" id="IPR013785">
    <property type="entry name" value="Aldolase_TIM"/>
</dbReference>
<dbReference type="InterPro" id="IPR011343">
    <property type="entry name" value="DeoC"/>
</dbReference>
<dbReference type="InterPro" id="IPR002915">
    <property type="entry name" value="DeoC/FbaB/LacD_aldolase"/>
</dbReference>
<dbReference type="InterPro" id="IPR028581">
    <property type="entry name" value="DeoC_typeI"/>
</dbReference>
<dbReference type="NCBIfam" id="TIGR00126">
    <property type="entry name" value="deoC"/>
    <property type="match status" value="1"/>
</dbReference>
<dbReference type="PANTHER" id="PTHR10889">
    <property type="entry name" value="DEOXYRIBOSE-PHOSPHATE ALDOLASE"/>
    <property type="match status" value="1"/>
</dbReference>
<dbReference type="PANTHER" id="PTHR10889:SF1">
    <property type="entry name" value="DEOXYRIBOSE-PHOSPHATE ALDOLASE"/>
    <property type="match status" value="1"/>
</dbReference>
<dbReference type="Pfam" id="PF01791">
    <property type="entry name" value="DeoC"/>
    <property type="match status" value="1"/>
</dbReference>
<dbReference type="PIRSF" id="PIRSF001357">
    <property type="entry name" value="DeoC"/>
    <property type="match status" value="1"/>
</dbReference>
<dbReference type="SMART" id="SM01133">
    <property type="entry name" value="DeoC"/>
    <property type="match status" value="1"/>
</dbReference>
<dbReference type="SUPFAM" id="SSF51569">
    <property type="entry name" value="Aldolase"/>
    <property type="match status" value="1"/>
</dbReference>
<name>DEOC_RHORT</name>
<accession>Q2RRZ2</accession>
<comment type="function">
    <text evidence="1">Catalyzes a reversible aldol reaction between acetaldehyde and D-glyceraldehyde 3-phosphate to generate 2-deoxy-D-ribose 5-phosphate.</text>
</comment>
<comment type="catalytic activity">
    <reaction evidence="1">
        <text>2-deoxy-D-ribose 5-phosphate = D-glyceraldehyde 3-phosphate + acetaldehyde</text>
        <dbReference type="Rhea" id="RHEA:12821"/>
        <dbReference type="ChEBI" id="CHEBI:15343"/>
        <dbReference type="ChEBI" id="CHEBI:59776"/>
        <dbReference type="ChEBI" id="CHEBI:62877"/>
        <dbReference type="EC" id="4.1.2.4"/>
    </reaction>
</comment>
<comment type="pathway">
    <text evidence="1">Carbohydrate degradation; 2-deoxy-D-ribose 1-phosphate degradation; D-glyceraldehyde 3-phosphate and acetaldehyde from 2-deoxy-alpha-D-ribose 1-phosphate: step 2/2.</text>
</comment>
<comment type="subcellular location">
    <subcellularLocation>
        <location evidence="1">Cytoplasm</location>
    </subcellularLocation>
</comment>
<comment type="similarity">
    <text evidence="1">Belongs to the DeoC/FbaB aldolase family. DeoC type 1 subfamily.</text>
</comment>
<protein>
    <recommendedName>
        <fullName evidence="1">Deoxyribose-phosphate aldolase</fullName>
        <shortName evidence="1">DERA</shortName>
        <ecNumber evidence="1">4.1.2.4</ecNumber>
    </recommendedName>
    <alternativeName>
        <fullName evidence="1">2-deoxy-D-ribose 5-phosphate aldolase</fullName>
    </alternativeName>
    <alternativeName>
        <fullName evidence="1">Phosphodeoxyriboaldolase</fullName>
        <shortName evidence="1">Deoxyriboaldolase</shortName>
    </alternativeName>
</protein>
<proteinExistence type="inferred from homology"/>
<organism>
    <name type="scientific">Rhodospirillum rubrum (strain ATCC 11170 / ATH 1.1.1 / DSM 467 / LMG 4362 / NCIMB 8255 / S1)</name>
    <dbReference type="NCBI Taxonomy" id="269796"/>
    <lineage>
        <taxon>Bacteria</taxon>
        <taxon>Pseudomonadati</taxon>
        <taxon>Pseudomonadota</taxon>
        <taxon>Alphaproteobacteria</taxon>
        <taxon>Rhodospirillales</taxon>
        <taxon>Rhodospirillaceae</taxon>
        <taxon>Rhodospirillum</taxon>
    </lineage>
</organism>
<reference key="1">
    <citation type="journal article" date="2011" name="Stand. Genomic Sci.">
        <title>Complete genome sequence of Rhodospirillum rubrum type strain (S1).</title>
        <authorList>
            <person name="Munk A.C."/>
            <person name="Copeland A."/>
            <person name="Lucas S."/>
            <person name="Lapidus A."/>
            <person name="Del Rio T.G."/>
            <person name="Barry K."/>
            <person name="Detter J.C."/>
            <person name="Hammon N."/>
            <person name="Israni S."/>
            <person name="Pitluck S."/>
            <person name="Brettin T."/>
            <person name="Bruce D."/>
            <person name="Han C."/>
            <person name="Tapia R."/>
            <person name="Gilna P."/>
            <person name="Schmutz J."/>
            <person name="Larimer F."/>
            <person name="Land M."/>
            <person name="Kyrpides N.C."/>
            <person name="Mavromatis K."/>
            <person name="Richardson P."/>
            <person name="Rohde M."/>
            <person name="Goeker M."/>
            <person name="Klenk H.P."/>
            <person name="Zhang Y."/>
            <person name="Roberts G.P."/>
            <person name="Reslewic S."/>
            <person name="Schwartz D.C."/>
        </authorList>
    </citation>
    <scope>NUCLEOTIDE SEQUENCE [LARGE SCALE GENOMIC DNA]</scope>
    <source>
        <strain>ATCC 11170 / ATH 1.1.1 / DSM 467 / LMG 4362 / NCIMB 8255 / S1</strain>
    </source>
</reference>
<gene>
    <name evidence="1" type="primary">deoC</name>
    <name type="ordered locus">Rru_A2303</name>
</gene>
<feature type="chain" id="PRO_0000231562" description="Deoxyribose-phosphate aldolase">
    <location>
        <begin position="1"/>
        <end position="238"/>
    </location>
</feature>
<feature type="active site" description="Proton donor/acceptor" evidence="1">
    <location>
        <position position="102"/>
    </location>
</feature>
<feature type="active site" description="Schiff-base intermediate with acetaldehyde" evidence="1">
    <location>
        <position position="164"/>
    </location>
</feature>
<feature type="active site" description="Proton donor/acceptor" evidence="1">
    <location>
        <position position="193"/>
    </location>
</feature>
<evidence type="ECO:0000255" key="1">
    <source>
        <dbReference type="HAMAP-Rule" id="MF_00114"/>
    </source>
</evidence>
<sequence>MTEPTNTLPNLGAAELAAYIDHTLLRPDAGAAEIAAWCDEAVTHGFKSVCVNPIQIPLVAAKLAGTGVGVCSVIGFPFGASPTAVKVAEAAWVVAHGATEVDMVIDIGALKDGRAEAVRDDIAAVKAACGKALLKVIIEACLLDDEQKALACRLSAEAGADFVKTSTGFAGGGATAKDVALMRRTVGSALGVKASGGVRTRDDALRMIAAGASRIGASASIAIVAEADAASTGAKGGY</sequence>